<accession>P0C813</accession>
<proteinExistence type="inferred from homology"/>
<evidence type="ECO:0000250" key="1">
    <source>
        <dbReference type="UniProtKB" id="A9JX07"/>
    </source>
</evidence>
<evidence type="ECO:0000305" key="2"/>
<organism>
    <name type="scientific">Staphylococcus aureus (strain MSSA476)</name>
    <dbReference type="NCBI Taxonomy" id="282459"/>
    <lineage>
        <taxon>Bacteria</taxon>
        <taxon>Bacillati</taxon>
        <taxon>Bacillota</taxon>
        <taxon>Bacilli</taxon>
        <taxon>Bacillales</taxon>
        <taxon>Staphylococcaceae</taxon>
        <taxon>Staphylococcus</taxon>
    </lineage>
</organism>
<name>PSMA3_STAAS</name>
<gene>
    <name type="primary">psmA3</name>
    <name type="ordered locus">SAS0409.2</name>
</gene>
<reference key="1">
    <citation type="journal article" date="2004" name="Proc. Natl. Acad. Sci. U.S.A.">
        <title>Complete genomes of two clinical Staphylococcus aureus strains: evidence for the rapid evolution of virulence and drug resistance.</title>
        <authorList>
            <person name="Holden M.T.G."/>
            <person name="Feil E.J."/>
            <person name="Lindsay J.A."/>
            <person name="Peacock S.J."/>
            <person name="Day N.P.J."/>
            <person name="Enright M.C."/>
            <person name="Foster T.J."/>
            <person name="Moore C.E."/>
            <person name="Hurst L."/>
            <person name="Atkin R."/>
            <person name="Barron A."/>
            <person name="Bason N."/>
            <person name="Bentley S.D."/>
            <person name="Chillingworth C."/>
            <person name="Chillingworth T."/>
            <person name="Churcher C."/>
            <person name="Clark L."/>
            <person name="Corton C."/>
            <person name="Cronin A."/>
            <person name="Doggett J."/>
            <person name="Dowd L."/>
            <person name="Feltwell T."/>
            <person name="Hance Z."/>
            <person name="Harris B."/>
            <person name="Hauser H."/>
            <person name="Holroyd S."/>
            <person name="Jagels K."/>
            <person name="James K.D."/>
            <person name="Lennard N."/>
            <person name="Line A."/>
            <person name="Mayes R."/>
            <person name="Moule S."/>
            <person name="Mungall K."/>
            <person name="Ormond D."/>
            <person name="Quail M.A."/>
            <person name="Rabbinowitsch E."/>
            <person name="Rutherford K.M."/>
            <person name="Sanders M."/>
            <person name="Sharp S."/>
            <person name="Simmonds M."/>
            <person name="Stevens K."/>
            <person name="Whitehead S."/>
            <person name="Barrell B.G."/>
            <person name="Spratt B.G."/>
            <person name="Parkhill J."/>
        </authorList>
    </citation>
    <scope>NUCLEOTIDE SEQUENCE [LARGE SCALE GENOMIC DNA]</scope>
    <source>
        <strain>MSSA476</strain>
    </source>
</reference>
<keyword id="KW-0204">Cytolysis</keyword>
<keyword id="KW-0843">Virulence</keyword>
<feature type="peptide" id="PRO_0000345068" description="Phenol-soluble modulin alpha 3 peptide">
    <location>
        <begin position="1"/>
        <end position="22"/>
    </location>
</feature>
<comment type="function">
    <text evidence="1">Peptide which can recruit, activate and subsequently lyse human neutrophils, thus eliminating the main cellular defense against infection.</text>
</comment>
<comment type="similarity">
    <text evidence="2">Belongs to the phenol-soluble modulin alpha peptides family.</text>
</comment>
<dbReference type="EMBL" id="BX571857">
    <property type="status" value="NOT_ANNOTATED_CDS"/>
    <property type="molecule type" value="Genomic_DNA"/>
</dbReference>
<dbReference type="RefSeq" id="WP_014373779.1">
    <property type="nucleotide sequence ID" value="NC_002953.3"/>
</dbReference>
<dbReference type="SMR" id="P0C813"/>
<dbReference type="GO" id="GO:0031640">
    <property type="term" value="P:killing of cells of another organism"/>
    <property type="evidence" value="ECO:0007669"/>
    <property type="project" value="UniProtKB-KW"/>
</dbReference>
<dbReference type="InterPro" id="IPR031429">
    <property type="entry name" value="PSM_alpha"/>
</dbReference>
<dbReference type="InterPro" id="IPR053383">
    <property type="entry name" value="PSM_alpha_peptides"/>
</dbReference>
<dbReference type="NCBIfam" id="NF033426">
    <property type="entry name" value="PSM_alpha_3"/>
    <property type="match status" value="1"/>
</dbReference>
<dbReference type="Pfam" id="PF17063">
    <property type="entry name" value="PSMalpha"/>
    <property type="match status" value="1"/>
</dbReference>
<sequence length="22" mass="2607">MEFVAKLFKFFKDLLGKFLGNN</sequence>
<protein>
    <recommendedName>
        <fullName>Phenol-soluble modulin alpha 3 peptide</fullName>
    </recommendedName>
</protein>